<protein>
    <recommendedName>
        <fullName evidence="1">Large ribosomal subunit protein uL3</fullName>
    </recommendedName>
    <alternativeName>
        <fullName evidence="2">50S ribosomal protein L3</fullName>
    </alternativeName>
</protein>
<organism>
    <name type="scientific">Fervidobacterium nodosum (strain ATCC 35602 / DSM 5306 / Rt17-B1)</name>
    <dbReference type="NCBI Taxonomy" id="381764"/>
    <lineage>
        <taxon>Bacteria</taxon>
        <taxon>Thermotogati</taxon>
        <taxon>Thermotogota</taxon>
        <taxon>Thermotogae</taxon>
        <taxon>Thermotogales</taxon>
        <taxon>Fervidobacteriaceae</taxon>
        <taxon>Fervidobacterium</taxon>
    </lineage>
</organism>
<accession>A7HM52</accession>
<reference key="1">
    <citation type="submission" date="2007-07" db="EMBL/GenBank/DDBJ databases">
        <title>Complete sequence of Fervidobacterium nodosum Rt17-B1.</title>
        <authorList>
            <consortium name="US DOE Joint Genome Institute"/>
            <person name="Copeland A."/>
            <person name="Lucas S."/>
            <person name="Lapidus A."/>
            <person name="Barry K."/>
            <person name="Glavina del Rio T."/>
            <person name="Dalin E."/>
            <person name="Tice H."/>
            <person name="Pitluck S."/>
            <person name="Saunders E."/>
            <person name="Brettin T."/>
            <person name="Bruce D."/>
            <person name="Detter J.C."/>
            <person name="Han C."/>
            <person name="Schmutz J."/>
            <person name="Larimer F."/>
            <person name="Land M."/>
            <person name="Hauser L."/>
            <person name="Kyrpides N."/>
            <person name="Mikhailova N."/>
            <person name="Nelson K."/>
            <person name="Gogarten J.P."/>
            <person name="Noll K."/>
            <person name="Richardson P."/>
        </authorList>
    </citation>
    <scope>NUCLEOTIDE SEQUENCE [LARGE SCALE GENOMIC DNA]</scope>
    <source>
        <strain>ATCC 35602 / DSM 5306 / Rt17-B1</strain>
    </source>
</reference>
<keyword id="KW-1185">Reference proteome</keyword>
<keyword id="KW-0687">Ribonucleoprotein</keyword>
<keyword id="KW-0689">Ribosomal protein</keyword>
<keyword id="KW-0694">RNA-binding</keyword>
<keyword id="KW-0699">rRNA-binding</keyword>
<comment type="function">
    <text evidence="1">One of the primary rRNA binding proteins, it binds directly near the 3'-end of the 23S rRNA, where it nucleates assembly of the 50S subunit.</text>
</comment>
<comment type="subunit">
    <text evidence="1">Part of the 50S ribosomal subunit. Forms a cluster with proteins L14 and L19.</text>
</comment>
<comment type="similarity">
    <text evidence="1">Belongs to the universal ribosomal protein uL3 family.</text>
</comment>
<sequence>MKFIIARKVGMTRLWKDEKVVPVTVLKAGPCVVVQKKTVEKDGYNAIQLGFEEVNEKKLTKPMLGVFKKANVKPMRVLKEFRVENVDQYSVGQEITVAIFQEGDKIDITGWTKGRGYSGAMKRWNFQGGPKAHGAKFHRELGSVGQHTEPARIFKGKRMPGRYGNERVTILNSEVVTIDAQNNLLAVKGGVPGARGSLVIIRSAVKQ</sequence>
<feature type="chain" id="PRO_1000073250" description="Large ribosomal subunit protein uL3">
    <location>
        <begin position="1"/>
        <end position="207"/>
    </location>
</feature>
<proteinExistence type="inferred from homology"/>
<gene>
    <name evidence="1" type="primary">rplC</name>
    <name type="ordered locus">Fnod_1138</name>
</gene>
<name>RL3_FERNB</name>
<dbReference type="EMBL" id="CP000771">
    <property type="protein sequence ID" value="ABS60985.1"/>
    <property type="molecule type" value="Genomic_DNA"/>
</dbReference>
<dbReference type="RefSeq" id="WP_011994298.1">
    <property type="nucleotide sequence ID" value="NC_009718.1"/>
</dbReference>
<dbReference type="SMR" id="A7HM52"/>
<dbReference type="STRING" id="381764.Fnod_1138"/>
<dbReference type="KEGG" id="fno:Fnod_1138"/>
<dbReference type="eggNOG" id="COG0087">
    <property type="taxonomic scope" value="Bacteria"/>
</dbReference>
<dbReference type="HOGENOM" id="CLU_044142_4_1_0"/>
<dbReference type="OrthoDB" id="9806135at2"/>
<dbReference type="Proteomes" id="UP000002415">
    <property type="component" value="Chromosome"/>
</dbReference>
<dbReference type="GO" id="GO:0022625">
    <property type="term" value="C:cytosolic large ribosomal subunit"/>
    <property type="evidence" value="ECO:0007669"/>
    <property type="project" value="TreeGrafter"/>
</dbReference>
<dbReference type="GO" id="GO:0019843">
    <property type="term" value="F:rRNA binding"/>
    <property type="evidence" value="ECO:0007669"/>
    <property type="project" value="UniProtKB-UniRule"/>
</dbReference>
<dbReference type="GO" id="GO:0003735">
    <property type="term" value="F:structural constituent of ribosome"/>
    <property type="evidence" value="ECO:0007669"/>
    <property type="project" value="InterPro"/>
</dbReference>
<dbReference type="GO" id="GO:0006412">
    <property type="term" value="P:translation"/>
    <property type="evidence" value="ECO:0007669"/>
    <property type="project" value="UniProtKB-UniRule"/>
</dbReference>
<dbReference type="FunFam" id="2.40.30.10:FF:000004">
    <property type="entry name" value="50S ribosomal protein L3"/>
    <property type="match status" value="1"/>
</dbReference>
<dbReference type="FunFam" id="3.30.160.810:FF:000001">
    <property type="entry name" value="50S ribosomal protein L3"/>
    <property type="match status" value="1"/>
</dbReference>
<dbReference type="Gene3D" id="3.30.160.810">
    <property type="match status" value="1"/>
</dbReference>
<dbReference type="Gene3D" id="2.40.30.10">
    <property type="entry name" value="Translation factors"/>
    <property type="match status" value="1"/>
</dbReference>
<dbReference type="HAMAP" id="MF_01325_B">
    <property type="entry name" value="Ribosomal_uL3_B"/>
    <property type="match status" value="1"/>
</dbReference>
<dbReference type="InterPro" id="IPR000597">
    <property type="entry name" value="Ribosomal_uL3"/>
</dbReference>
<dbReference type="InterPro" id="IPR019927">
    <property type="entry name" value="Ribosomal_uL3_bac/org-type"/>
</dbReference>
<dbReference type="InterPro" id="IPR019926">
    <property type="entry name" value="Ribosomal_uL3_CS"/>
</dbReference>
<dbReference type="InterPro" id="IPR009000">
    <property type="entry name" value="Transl_B-barrel_sf"/>
</dbReference>
<dbReference type="NCBIfam" id="TIGR03625">
    <property type="entry name" value="L3_bact"/>
    <property type="match status" value="1"/>
</dbReference>
<dbReference type="PANTHER" id="PTHR11229">
    <property type="entry name" value="50S RIBOSOMAL PROTEIN L3"/>
    <property type="match status" value="1"/>
</dbReference>
<dbReference type="PANTHER" id="PTHR11229:SF16">
    <property type="entry name" value="LARGE RIBOSOMAL SUBUNIT PROTEIN UL3C"/>
    <property type="match status" value="1"/>
</dbReference>
<dbReference type="Pfam" id="PF00297">
    <property type="entry name" value="Ribosomal_L3"/>
    <property type="match status" value="1"/>
</dbReference>
<dbReference type="SUPFAM" id="SSF50447">
    <property type="entry name" value="Translation proteins"/>
    <property type="match status" value="1"/>
</dbReference>
<dbReference type="PROSITE" id="PS00474">
    <property type="entry name" value="RIBOSOMAL_L3"/>
    <property type="match status" value="1"/>
</dbReference>
<evidence type="ECO:0000255" key="1">
    <source>
        <dbReference type="HAMAP-Rule" id="MF_01325"/>
    </source>
</evidence>
<evidence type="ECO:0000305" key="2"/>